<gene>
    <name type="primary">Eif4a1</name>
    <name type="synonym">Ddx2a</name>
    <name type="synonym">Eif4a</name>
</gene>
<protein>
    <recommendedName>
        <fullName>Eukaryotic initiation factor 4A-I</fullName>
        <shortName>eIF-4A-I</shortName>
        <shortName>eIF4A-I</shortName>
        <ecNumber>3.6.4.13</ecNumber>
    </recommendedName>
    <alternativeName>
        <fullName>ATP-dependent RNA helicase eIF4A-1</fullName>
    </alternativeName>
</protein>
<dbReference type="EC" id="3.6.4.13"/>
<dbReference type="EMBL" id="X03039">
    <property type="protein sequence ID" value="CAA26842.1"/>
    <property type="status" value="ALT_INIT"/>
    <property type="molecule type" value="mRNA"/>
</dbReference>
<dbReference type="EMBL" id="X03039">
    <property type="protein sequence ID" value="CAA26843.1"/>
    <property type="status" value="ALT_INIT"/>
    <property type="molecule type" value="mRNA"/>
</dbReference>
<dbReference type="EMBL" id="X03040">
    <property type="protein sequence ID" value="CAA26845.1"/>
    <property type="status" value="ALT_INIT"/>
    <property type="molecule type" value="mRNA"/>
</dbReference>
<dbReference type="EMBL" id="X03040">
    <property type="protein sequence ID" value="CAA26846.1"/>
    <property type="status" value="ALT_INIT"/>
    <property type="molecule type" value="mRNA"/>
</dbReference>
<dbReference type="EMBL" id="L36611">
    <property type="protein sequence ID" value="AAA50407.1"/>
    <property type="molecule type" value="Genomic_DNA"/>
</dbReference>
<dbReference type="EMBL" id="M22873">
    <property type="protein sequence ID" value="AAA50407.1"/>
    <property type="status" value="JOINED"/>
    <property type="molecule type" value="Genomic_DNA"/>
</dbReference>
<dbReference type="EMBL" id="L36608">
    <property type="protein sequence ID" value="AAA50407.1"/>
    <property type="status" value="JOINED"/>
    <property type="molecule type" value="Genomic_DNA"/>
</dbReference>
<dbReference type="EMBL" id="L36609">
    <property type="protein sequence ID" value="AAA50407.1"/>
    <property type="status" value="JOINED"/>
    <property type="molecule type" value="Genomic_DNA"/>
</dbReference>
<dbReference type="EMBL" id="L36610">
    <property type="protein sequence ID" value="AAA50407.1"/>
    <property type="status" value="JOINED"/>
    <property type="molecule type" value="Genomic_DNA"/>
</dbReference>
<dbReference type="EMBL" id="AB011595">
    <property type="protein sequence ID" value="BAA25075.1"/>
    <property type="molecule type" value="Genomic_DNA"/>
</dbReference>
<dbReference type="EMBL" id="AK077429">
    <property type="protein sequence ID" value="BAC36796.1"/>
    <property type="molecule type" value="mRNA"/>
</dbReference>
<dbReference type="EMBL" id="BC049915">
    <property type="protein sequence ID" value="AAH49915.1"/>
    <property type="molecule type" value="mRNA"/>
</dbReference>
<dbReference type="CCDS" id="CCDS24904.1"/>
<dbReference type="PIR" id="JS0039">
    <property type="entry name" value="FIMS4A"/>
</dbReference>
<dbReference type="RefSeq" id="NP_659207.1">
    <property type="nucleotide sequence ID" value="NM_144958.4"/>
</dbReference>
<dbReference type="PDB" id="6XKI">
    <property type="method" value="X-ray"/>
    <property type="resolution" value="2.87 A"/>
    <property type="chains" value="A=19-406"/>
</dbReference>
<dbReference type="PDB" id="7DDX">
    <property type="method" value="X-ray"/>
    <property type="resolution" value="2.50 A"/>
    <property type="chains" value="B=1-238"/>
</dbReference>
<dbReference type="PDBsum" id="6XKI"/>
<dbReference type="PDBsum" id="7DDX"/>
<dbReference type="SMR" id="P60843"/>
<dbReference type="BioGRID" id="199418">
    <property type="interactions" value="37"/>
</dbReference>
<dbReference type="ComplexPortal" id="CPX-5863">
    <property type="entry name" value="Eukaryotic translation initiation factor 4F, EIF4A1 and EIF4G1 variant"/>
</dbReference>
<dbReference type="ComplexPortal" id="CPX-5865">
    <property type="entry name" value="Eukaryotic translation initiation factor 4F, EIF4A1 and EIF4G3 variant"/>
</dbReference>
<dbReference type="FunCoup" id="P60843">
    <property type="interactions" value="2630"/>
</dbReference>
<dbReference type="IntAct" id="P60843">
    <property type="interactions" value="9"/>
</dbReference>
<dbReference type="MINT" id="P60843"/>
<dbReference type="STRING" id="10090.ENSMUSP00000127034"/>
<dbReference type="ChEMBL" id="CHEMBL3309046"/>
<dbReference type="GlyGen" id="P60843">
    <property type="glycosylation" value="1 site, 1 O-linked glycan (1 site)"/>
</dbReference>
<dbReference type="iPTMnet" id="P60843"/>
<dbReference type="PhosphoSitePlus" id="P60843"/>
<dbReference type="SwissPalm" id="P60843"/>
<dbReference type="REPRODUCTION-2DPAGE" id="P60843"/>
<dbReference type="CPTAC" id="non-CPTAC-3823"/>
<dbReference type="jPOST" id="P60843"/>
<dbReference type="PaxDb" id="10090-ENSMUSP00000127034"/>
<dbReference type="PeptideAtlas" id="P60843"/>
<dbReference type="ProteomicsDB" id="267098"/>
<dbReference type="Pumba" id="P60843"/>
<dbReference type="Antibodypedia" id="24168">
    <property type="antibodies" value="232 antibodies from 27 providers"/>
</dbReference>
<dbReference type="DNASU" id="13681"/>
<dbReference type="Ensembl" id="ENSMUST00000163666.3">
    <property type="protein sequence ID" value="ENSMUSP00000127034.3"/>
    <property type="gene ID" value="ENSMUSG00000059796.17"/>
</dbReference>
<dbReference type="GeneID" id="13681"/>
<dbReference type="KEGG" id="mmu:13681"/>
<dbReference type="UCSC" id="uc007jra.2">
    <property type="organism name" value="mouse"/>
</dbReference>
<dbReference type="AGR" id="MGI:95303"/>
<dbReference type="CTD" id="1973"/>
<dbReference type="MGI" id="MGI:95303">
    <property type="gene designation" value="Eif4a1"/>
</dbReference>
<dbReference type="VEuPathDB" id="HostDB:ENSMUSG00000059796"/>
<dbReference type="eggNOG" id="KOG0327">
    <property type="taxonomic scope" value="Eukaryota"/>
</dbReference>
<dbReference type="GeneTree" id="ENSGT00940000153889"/>
<dbReference type="HOGENOM" id="CLU_003041_1_0_1"/>
<dbReference type="InParanoid" id="P60843"/>
<dbReference type="OMA" id="DTIHGDK"/>
<dbReference type="OrthoDB" id="10265785at2759"/>
<dbReference type="PhylomeDB" id="P60843"/>
<dbReference type="TreeFam" id="TF101524"/>
<dbReference type="Reactome" id="R-MMU-1169408">
    <property type="pathway name" value="ISG15 antiviral mechanism"/>
</dbReference>
<dbReference type="Reactome" id="R-MMU-156827">
    <property type="pathway name" value="L13a-mediated translational silencing of Ceruloplasmin expression"/>
</dbReference>
<dbReference type="Reactome" id="R-MMU-429947">
    <property type="pathway name" value="Deadenylation of mRNA"/>
</dbReference>
<dbReference type="Reactome" id="R-MMU-72649">
    <property type="pathway name" value="Translation initiation complex formation"/>
</dbReference>
<dbReference type="Reactome" id="R-MMU-72662">
    <property type="pathway name" value="Activation of the mRNA upon binding of the cap-binding complex and eIFs, and subsequent binding to 43S"/>
</dbReference>
<dbReference type="Reactome" id="R-MMU-72702">
    <property type="pathway name" value="Ribosomal scanning and start codon recognition"/>
</dbReference>
<dbReference type="Reactome" id="R-MMU-72706">
    <property type="pathway name" value="GTP hydrolysis and joining of the 60S ribosomal subunit"/>
</dbReference>
<dbReference type="BioGRID-ORCS" id="13681">
    <property type="hits" value="30 hits in 77 CRISPR screens"/>
</dbReference>
<dbReference type="CD-CODE" id="5E82D60E">
    <property type="entry name" value="Nucleolus"/>
</dbReference>
<dbReference type="CD-CODE" id="DE1E139C">
    <property type="entry name" value="Chromatoid body"/>
</dbReference>
<dbReference type="ChiTaRS" id="Eif4a1">
    <property type="organism name" value="mouse"/>
</dbReference>
<dbReference type="PRO" id="PR:P60843"/>
<dbReference type="Proteomes" id="UP000000589">
    <property type="component" value="Chromosome 11"/>
</dbReference>
<dbReference type="RNAct" id="P60843">
    <property type="molecule type" value="protein"/>
</dbReference>
<dbReference type="Bgee" id="ENSMUSG00000059796">
    <property type="expression patterns" value="Expressed in embryonic post-anal tail and 77 other cell types or tissues"/>
</dbReference>
<dbReference type="ExpressionAtlas" id="P60843">
    <property type="expression patterns" value="baseline and differential"/>
</dbReference>
<dbReference type="GO" id="GO:0010494">
    <property type="term" value="C:cytoplasmic stress granule"/>
    <property type="evidence" value="ECO:0007669"/>
    <property type="project" value="UniProtKB-SubCell"/>
</dbReference>
<dbReference type="GO" id="GO:0005829">
    <property type="term" value="C:cytosol"/>
    <property type="evidence" value="ECO:0000304"/>
    <property type="project" value="Reactome"/>
</dbReference>
<dbReference type="GO" id="GO:0016281">
    <property type="term" value="C:eukaryotic translation initiation factor 4F complex"/>
    <property type="evidence" value="ECO:0000303"/>
    <property type="project" value="ComplexPortal"/>
</dbReference>
<dbReference type="GO" id="GO:0097165">
    <property type="term" value="C:nuclear stress granule"/>
    <property type="evidence" value="ECO:0000250"/>
    <property type="project" value="UniProtKB"/>
</dbReference>
<dbReference type="GO" id="GO:0048471">
    <property type="term" value="C:perinuclear region of cytoplasm"/>
    <property type="evidence" value="ECO:0000250"/>
    <property type="project" value="UniProtKB"/>
</dbReference>
<dbReference type="GO" id="GO:0005886">
    <property type="term" value="C:plasma membrane"/>
    <property type="evidence" value="ECO:0000250"/>
    <property type="project" value="UniProtKB"/>
</dbReference>
<dbReference type="GO" id="GO:0005524">
    <property type="term" value="F:ATP binding"/>
    <property type="evidence" value="ECO:0007669"/>
    <property type="project" value="UniProtKB-KW"/>
</dbReference>
<dbReference type="GO" id="GO:0016887">
    <property type="term" value="F:ATP hydrolysis activity"/>
    <property type="evidence" value="ECO:0007669"/>
    <property type="project" value="RHEA"/>
</dbReference>
<dbReference type="GO" id="GO:0003725">
    <property type="term" value="F:double-stranded RNA binding"/>
    <property type="evidence" value="ECO:0000266"/>
    <property type="project" value="MGI"/>
</dbReference>
<dbReference type="GO" id="GO:0003724">
    <property type="term" value="F:RNA helicase activity"/>
    <property type="evidence" value="ECO:0007669"/>
    <property type="project" value="UniProtKB-EC"/>
</dbReference>
<dbReference type="GO" id="GO:0003743">
    <property type="term" value="F:translation initiation factor activity"/>
    <property type="evidence" value="ECO:0007669"/>
    <property type="project" value="UniProtKB-KW"/>
</dbReference>
<dbReference type="GO" id="GO:0002183">
    <property type="term" value="P:cytoplasmic translational initiation"/>
    <property type="evidence" value="ECO:0007669"/>
    <property type="project" value="Ensembl"/>
</dbReference>
<dbReference type="GO" id="GO:0045944">
    <property type="term" value="P:positive regulation of transcription by RNA polymerase II"/>
    <property type="evidence" value="ECO:0000250"/>
    <property type="project" value="UniProtKB"/>
</dbReference>
<dbReference type="GO" id="GO:0006413">
    <property type="term" value="P:translational initiation"/>
    <property type="evidence" value="ECO:0000303"/>
    <property type="project" value="ComplexPortal"/>
</dbReference>
<dbReference type="CDD" id="cd18046">
    <property type="entry name" value="DEADc_EIF4AII_EIF4AI_DDX2"/>
    <property type="match status" value="1"/>
</dbReference>
<dbReference type="CDD" id="cd18787">
    <property type="entry name" value="SF2_C_DEAD"/>
    <property type="match status" value="1"/>
</dbReference>
<dbReference type="FunFam" id="3.40.50.300:FF:000089">
    <property type="entry name" value="Eukaryotic initiation factor 4A-II"/>
    <property type="match status" value="1"/>
</dbReference>
<dbReference type="FunFam" id="3.40.50.300:FF:000031">
    <property type="entry name" value="Eukaryotic initiation factor 4A-III"/>
    <property type="match status" value="1"/>
</dbReference>
<dbReference type="Gene3D" id="3.40.50.300">
    <property type="entry name" value="P-loop containing nucleotide triphosphate hydrolases"/>
    <property type="match status" value="2"/>
</dbReference>
<dbReference type="InterPro" id="IPR011545">
    <property type="entry name" value="DEAD/DEAH_box_helicase_dom"/>
</dbReference>
<dbReference type="InterPro" id="IPR044728">
    <property type="entry name" value="EIF4A_DEADc"/>
</dbReference>
<dbReference type="InterPro" id="IPR014001">
    <property type="entry name" value="Helicase_ATP-bd"/>
</dbReference>
<dbReference type="InterPro" id="IPR001650">
    <property type="entry name" value="Helicase_C-like"/>
</dbReference>
<dbReference type="InterPro" id="IPR027417">
    <property type="entry name" value="P-loop_NTPase"/>
</dbReference>
<dbReference type="InterPro" id="IPR000629">
    <property type="entry name" value="RNA-helicase_DEAD-box_CS"/>
</dbReference>
<dbReference type="InterPro" id="IPR014014">
    <property type="entry name" value="RNA_helicase_DEAD_Q_motif"/>
</dbReference>
<dbReference type="PANTHER" id="PTHR47958">
    <property type="entry name" value="ATP-DEPENDENT RNA HELICASE DBP3"/>
    <property type="match status" value="1"/>
</dbReference>
<dbReference type="Pfam" id="PF00270">
    <property type="entry name" value="DEAD"/>
    <property type="match status" value="1"/>
</dbReference>
<dbReference type="Pfam" id="PF00271">
    <property type="entry name" value="Helicase_C"/>
    <property type="match status" value="1"/>
</dbReference>
<dbReference type="SMART" id="SM00487">
    <property type="entry name" value="DEXDc"/>
    <property type="match status" value="1"/>
</dbReference>
<dbReference type="SMART" id="SM00490">
    <property type="entry name" value="HELICc"/>
    <property type="match status" value="1"/>
</dbReference>
<dbReference type="SUPFAM" id="SSF52540">
    <property type="entry name" value="P-loop containing nucleoside triphosphate hydrolases"/>
    <property type="match status" value="1"/>
</dbReference>
<dbReference type="PROSITE" id="PS00039">
    <property type="entry name" value="DEAD_ATP_HELICASE"/>
    <property type="match status" value="1"/>
</dbReference>
<dbReference type="PROSITE" id="PS51192">
    <property type="entry name" value="HELICASE_ATP_BIND_1"/>
    <property type="match status" value="1"/>
</dbReference>
<dbReference type="PROSITE" id="PS51194">
    <property type="entry name" value="HELICASE_CTER"/>
    <property type="match status" value="1"/>
</dbReference>
<dbReference type="PROSITE" id="PS51195">
    <property type="entry name" value="Q_MOTIF"/>
    <property type="match status" value="1"/>
</dbReference>
<reference key="1">
    <citation type="journal article" date="1985" name="Nucleic Acids Res.">
        <title>Cloning of eukaryotic protein synthesis initiation factor genes: isolation and characterization of cDNA clones encoding factor eIF-4A.</title>
        <authorList>
            <person name="Nielsen P.J."/>
            <person name="McMaster G.K."/>
            <person name="Trachsel H."/>
        </authorList>
    </citation>
    <scope>NUCLEOTIDE SEQUENCE [MRNA]</scope>
</reference>
<reference key="2">
    <citation type="journal article" date="1988" name="Gene">
        <title>Isolation and mapping of a gene for protein synthesis initiation factor 4A and its expression during differentiation of murine erythroleukemia cells.</title>
        <authorList>
            <person name="Reddy N.S."/>
            <person name="Roth W.W."/>
            <person name="Bragg P.W."/>
            <person name="Wahba A.J."/>
        </authorList>
    </citation>
    <scope>NUCLEOTIDE SEQUENCE [GENOMIC DNA]</scope>
</reference>
<reference key="3">
    <citation type="submission" date="1998-03" db="EMBL/GenBank/DDBJ databases">
        <authorList>
            <person name="Miyashita A."/>
            <person name="Shimizu N."/>
            <person name="Nakajima T."/>
            <person name="Odani S."/>
            <person name="Kuwano R."/>
        </authorList>
    </citation>
    <scope>NUCLEOTIDE SEQUENCE [GENOMIC DNA]</scope>
    <source>
        <strain>129</strain>
    </source>
</reference>
<reference key="4">
    <citation type="journal article" date="2005" name="Science">
        <title>The transcriptional landscape of the mammalian genome.</title>
        <authorList>
            <person name="Carninci P."/>
            <person name="Kasukawa T."/>
            <person name="Katayama S."/>
            <person name="Gough J."/>
            <person name="Frith M.C."/>
            <person name="Maeda N."/>
            <person name="Oyama R."/>
            <person name="Ravasi T."/>
            <person name="Lenhard B."/>
            <person name="Wells C."/>
            <person name="Kodzius R."/>
            <person name="Shimokawa K."/>
            <person name="Bajic V.B."/>
            <person name="Brenner S.E."/>
            <person name="Batalov S."/>
            <person name="Forrest A.R."/>
            <person name="Zavolan M."/>
            <person name="Davis M.J."/>
            <person name="Wilming L.G."/>
            <person name="Aidinis V."/>
            <person name="Allen J.E."/>
            <person name="Ambesi-Impiombato A."/>
            <person name="Apweiler R."/>
            <person name="Aturaliya R.N."/>
            <person name="Bailey T.L."/>
            <person name="Bansal M."/>
            <person name="Baxter L."/>
            <person name="Beisel K.W."/>
            <person name="Bersano T."/>
            <person name="Bono H."/>
            <person name="Chalk A.M."/>
            <person name="Chiu K.P."/>
            <person name="Choudhary V."/>
            <person name="Christoffels A."/>
            <person name="Clutterbuck D.R."/>
            <person name="Crowe M.L."/>
            <person name="Dalla E."/>
            <person name="Dalrymple B.P."/>
            <person name="de Bono B."/>
            <person name="Della Gatta G."/>
            <person name="di Bernardo D."/>
            <person name="Down T."/>
            <person name="Engstrom P."/>
            <person name="Fagiolini M."/>
            <person name="Faulkner G."/>
            <person name="Fletcher C.F."/>
            <person name="Fukushima T."/>
            <person name="Furuno M."/>
            <person name="Futaki S."/>
            <person name="Gariboldi M."/>
            <person name="Georgii-Hemming P."/>
            <person name="Gingeras T.R."/>
            <person name="Gojobori T."/>
            <person name="Green R.E."/>
            <person name="Gustincich S."/>
            <person name="Harbers M."/>
            <person name="Hayashi Y."/>
            <person name="Hensch T.K."/>
            <person name="Hirokawa N."/>
            <person name="Hill D."/>
            <person name="Huminiecki L."/>
            <person name="Iacono M."/>
            <person name="Ikeo K."/>
            <person name="Iwama A."/>
            <person name="Ishikawa T."/>
            <person name="Jakt M."/>
            <person name="Kanapin A."/>
            <person name="Katoh M."/>
            <person name="Kawasawa Y."/>
            <person name="Kelso J."/>
            <person name="Kitamura H."/>
            <person name="Kitano H."/>
            <person name="Kollias G."/>
            <person name="Krishnan S.P."/>
            <person name="Kruger A."/>
            <person name="Kummerfeld S.K."/>
            <person name="Kurochkin I.V."/>
            <person name="Lareau L.F."/>
            <person name="Lazarevic D."/>
            <person name="Lipovich L."/>
            <person name="Liu J."/>
            <person name="Liuni S."/>
            <person name="McWilliam S."/>
            <person name="Madan Babu M."/>
            <person name="Madera M."/>
            <person name="Marchionni L."/>
            <person name="Matsuda H."/>
            <person name="Matsuzawa S."/>
            <person name="Miki H."/>
            <person name="Mignone F."/>
            <person name="Miyake S."/>
            <person name="Morris K."/>
            <person name="Mottagui-Tabar S."/>
            <person name="Mulder N."/>
            <person name="Nakano N."/>
            <person name="Nakauchi H."/>
            <person name="Ng P."/>
            <person name="Nilsson R."/>
            <person name="Nishiguchi S."/>
            <person name="Nishikawa S."/>
            <person name="Nori F."/>
            <person name="Ohara O."/>
            <person name="Okazaki Y."/>
            <person name="Orlando V."/>
            <person name="Pang K.C."/>
            <person name="Pavan W.J."/>
            <person name="Pavesi G."/>
            <person name="Pesole G."/>
            <person name="Petrovsky N."/>
            <person name="Piazza S."/>
            <person name="Reed J."/>
            <person name="Reid J.F."/>
            <person name="Ring B.Z."/>
            <person name="Ringwald M."/>
            <person name="Rost B."/>
            <person name="Ruan Y."/>
            <person name="Salzberg S.L."/>
            <person name="Sandelin A."/>
            <person name="Schneider C."/>
            <person name="Schoenbach C."/>
            <person name="Sekiguchi K."/>
            <person name="Semple C.A."/>
            <person name="Seno S."/>
            <person name="Sessa L."/>
            <person name="Sheng Y."/>
            <person name="Shibata Y."/>
            <person name="Shimada H."/>
            <person name="Shimada K."/>
            <person name="Silva D."/>
            <person name="Sinclair B."/>
            <person name="Sperling S."/>
            <person name="Stupka E."/>
            <person name="Sugiura K."/>
            <person name="Sultana R."/>
            <person name="Takenaka Y."/>
            <person name="Taki K."/>
            <person name="Tammoja K."/>
            <person name="Tan S.L."/>
            <person name="Tang S."/>
            <person name="Taylor M.S."/>
            <person name="Tegner J."/>
            <person name="Teichmann S.A."/>
            <person name="Ueda H.R."/>
            <person name="van Nimwegen E."/>
            <person name="Verardo R."/>
            <person name="Wei C.L."/>
            <person name="Yagi K."/>
            <person name="Yamanishi H."/>
            <person name="Zabarovsky E."/>
            <person name="Zhu S."/>
            <person name="Zimmer A."/>
            <person name="Hide W."/>
            <person name="Bult C."/>
            <person name="Grimmond S.M."/>
            <person name="Teasdale R.D."/>
            <person name="Liu E.T."/>
            <person name="Brusic V."/>
            <person name="Quackenbush J."/>
            <person name="Wahlestedt C."/>
            <person name="Mattick J.S."/>
            <person name="Hume D.A."/>
            <person name="Kai C."/>
            <person name="Sasaki D."/>
            <person name="Tomaru Y."/>
            <person name="Fukuda S."/>
            <person name="Kanamori-Katayama M."/>
            <person name="Suzuki M."/>
            <person name="Aoki J."/>
            <person name="Arakawa T."/>
            <person name="Iida J."/>
            <person name="Imamura K."/>
            <person name="Itoh M."/>
            <person name="Kato T."/>
            <person name="Kawaji H."/>
            <person name="Kawagashira N."/>
            <person name="Kawashima T."/>
            <person name="Kojima M."/>
            <person name="Kondo S."/>
            <person name="Konno H."/>
            <person name="Nakano K."/>
            <person name="Ninomiya N."/>
            <person name="Nishio T."/>
            <person name="Okada M."/>
            <person name="Plessy C."/>
            <person name="Shibata K."/>
            <person name="Shiraki T."/>
            <person name="Suzuki S."/>
            <person name="Tagami M."/>
            <person name="Waki K."/>
            <person name="Watahiki A."/>
            <person name="Okamura-Oho Y."/>
            <person name="Suzuki H."/>
            <person name="Kawai J."/>
            <person name="Hayashizaki Y."/>
        </authorList>
    </citation>
    <scope>NUCLEOTIDE SEQUENCE [LARGE SCALE MRNA]</scope>
    <source>
        <strain>C57BL/6J</strain>
    </source>
</reference>
<reference key="5">
    <citation type="journal article" date="2004" name="Genome Res.">
        <title>The status, quality, and expansion of the NIH full-length cDNA project: the Mammalian Gene Collection (MGC).</title>
        <authorList>
            <consortium name="The MGC Project Team"/>
        </authorList>
    </citation>
    <scope>NUCLEOTIDE SEQUENCE [LARGE SCALE MRNA]</scope>
    <source>
        <strain>Czech II</strain>
        <tissue>Mammary gland</tissue>
    </source>
</reference>
<reference key="6">
    <citation type="journal article" date="1992" name="EMBO J.">
        <title>Mutational analysis of a DEAD box RNA helicase: the mammalian translation initiation factor eIF-4A.</title>
        <authorList>
            <person name="Pause A."/>
            <person name="Somenberg N."/>
        </authorList>
    </citation>
    <scope>MUTAGENESIS</scope>
</reference>
<reference key="7">
    <citation type="journal article" date="2010" name="Cell">
        <title>A tissue-specific atlas of mouse protein phosphorylation and expression.</title>
        <authorList>
            <person name="Huttlin E.L."/>
            <person name="Jedrychowski M.P."/>
            <person name="Elias J.E."/>
            <person name="Goswami T."/>
            <person name="Rad R."/>
            <person name="Beausoleil S.A."/>
            <person name="Villen J."/>
            <person name="Haas W."/>
            <person name="Sowa M.E."/>
            <person name="Gygi S.P."/>
        </authorList>
    </citation>
    <scope>IDENTIFICATION BY MASS SPECTROMETRY [LARGE SCALE ANALYSIS]</scope>
    <source>
        <tissue>Brain</tissue>
        <tissue>Brown adipose tissue</tissue>
        <tissue>Heart</tissue>
        <tissue>Kidney</tissue>
        <tissue>Liver</tissue>
        <tissue>Lung</tissue>
        <tissue>Pancreas</tissue>
        <tissue>Spleen</tissue>
        <tissue>Testis</tissue>
    </source>
</reference>
<reference key="8">
    <citation type="journal article" date="2013" name="Mol. Cell">
        <title>SIRT5-mediated lysine desuccinylation impacts diverse metabolic pathways.</title>
        <authorList>
            <person name="Park J."/>
            <person name="Chen Y."/>
            <person name="Tishkoff D.X."/>
            <person name="Peng C."/>
            <person name="Tan M."/>
            <person name="Dai L."/>
            <person name="Xie Z."/>
            <person name="Zhang Y."/>
            <person name="Zwaans B.M."/>
            <person name="Skinner M.E."/>
            <person name="Lombard D.B."/>
            <person name="Zhao Y."/>
        </authorList>
    </citation>
    <scope>ACETYLATION [LARGE SCALE ANALYSIS] AT LYS-193 AND LYS-238</scope>
    <scope>IDENTIFICATION BY MASS SPECTROMETRY [LARGE SCALE ANALYSIS]</scope>
    <source>
        <tissue>Embryonic fibroblast</tissue>
    </source>
</reference>
<name>IF4A1_MOUSE</name>
<sequence length="406" mass="46154">MSASQDSRSRDNGPDGMEPEGVIESNWNEIVDSFDDMNLSESLLRGIYAYGFEKPSAIQQRAILPCIKGYDVIAQAQSGTGKTATFAISILQQIELDLKATQALVLAPTRELAQQIQKVVMALGDYMGASCHACIGGTNVRAEVQKLQMEAPHIIVGTPGRVFDMLNRRYLSPKYIKMFVLDEADEMLSRGFKDQIYDIFQKLNSNTQVVLLSATMPSDVLEVTKKFMRDPIRILVKKEELTLEGIRQFYINVEREEWKLDTLCDLYETLTITQAVIFINTRRKVDWLTEKMHARDFTVSAMHGDMDQKERDVIMREFRSGSSRVLITTDLLARGIDVQQVSLVINYDLPTNRENYIHRIGRGGRFGRKGVAINMVTEEDKRTLRDIETFYNTSIEEMPLNVADLI</sequence>
<proteinExistence type="evidence at protein level"/>
<keyword id="KW-0002">3D-structure</keyword>
<keyword id="KW-0007">Acetylation</keyword>
<keyword id="KW-0067">ATP-binding</keyword>
<keyword id="KW-1003">Cell membrane</keyword>
<keyword id="KW-0963">Cytoplasm</keyword>
<keyword id="KW-0347">Helicase</keyword>
<keyword id="KW-0378">Hydrolase</keyword>
<keyword id="KW-0396">Initiation factor</keyword>
<keyword id="KW-1017">Isopeptide bond</keyword>
<keyword id="KW-0472">Membrane</keyword>
<keyword id="KW-0547">Nucleotide-binding</keyword>
<keyword id="KW-0597">Phosphoprotein</keyword>
<keyword id="KW-0648">Protein biosynthesis</keyword>
<keyword id="KW-1185">Reference proteome</keyword>
<keyword id="KW-0694">RNA-binding</keyword>
<keyword id="KW-0832">Ubl conjugation</keyword>
<feature type="initiator methionine" description="Removed" evidence="2">
    <location>
        <position position="1"/>
    </location>
</feature>
<feature type="chain" id="PRO_0000054935" description="Eukaryotic initiation factor 4A-I">
    <location>
        <begin position="2"/>
        <end position="406"/>
    </location>
</feature>
<feature type="domain" description="Helicase ATP-binding" evidence="3">
    <location>
        <begin position="63"/>
        <end position="234"/>
    </location>
</feature>
<feature type="domain" description="Helicase C-terminal" evidence="4">
    <location>
        <begin position="245"/>
        <end position="406"/>
    </location>
</feature>
<feature type="region of interest" description="Disordered" evidence="5">
    <location>
        <begin position="1"/>
        <end position="21"/>
    </location>
</feature>
<feature type="short sequence motif" description="Q motif">
    <location>
        <begin position="32"/>
        <end position="60"/>
    </location>
</feature>
<feature type="short sequence motif" description="DEAD box">
    <location>
        <begin position="182"/>
        <end position="185"/>
    </location>
</feature>
<feature type="binding site" evidence="3">
    <location>
        <begin position="76"/>
        <end position="83"/>
    </location>
    <ligand>
        <name>ATP</name>
        <dbReference type="ChEBI" id="CHEBI:30616"/>
    </ligand>
</feature>
<feature type="modified residue" description="N-acetylserine" evidence="2">
    <location>
        <position position="2"/>
    </location>
</feature>
<feature type="modified residue" description="Phosphoserine" evidence="2">
    <location>
        <position position="4"/>
    </location>
</feature>
<feature type="modified residue" description="N6-acetyllysine" evidence="2">
    <location>
        <position position="118"/>
    </location>
</feature>
<feature type="modified residue" description="Phosphothreonine" evidence="2">
    <location>
        <position position="158"/>
    </location>
</feature>
<feature type="modified residue" description="N6-acetyllysine" evidence="2">
    <location>
        <position position="174"/>
    </location>
</feature>
<feature type="modified residue" description="N6-acetyllysine" evidence="7">
    <location>
        <position position="193"/>
    </location>
</feature>
<feature type="modified residue" description="N6-acetyllysine; alternate" evidence="7">
    <location>
        <position position="238"/>
    </location>
</feature>
<feature type="cross-link" description="Glycyl lysine isopeptide (Lys-Gly) (interchain with G-Cter in SUMO2)" evidence="2">
    <location>
        <position position="146"/>
    </location>
</feature>
<feature type="cross-link" description="Glycyl lysine isopeptide (Lys-Gly) (interchain with G-Cter in SUMO2)" evidence="2">
    <location>
        <position position="225"/>
    </location>
</feature>
<feature type="cross-link" description="Glycyl lysine isopeptide (Lys-Gly) (interchain with G-Cter in SUMO2); alternate" evidence="2">
    <location>
        <position position="238"/>
    </location>
</feature>
<feature type="cross-link" description="Glycyl lysine isopeptide (Lys-Gly) (interchain with G-Cter in SUMO2)" evidence="2">
    <location>
        <position position="309"/>
    </location>
</feature>
<feature type="cross-link" description="Glycyl lysine isopeptide (Lys-Gly) (interchain with G-Cter in SUMO2)" evidence="2">
    <location>
        <position position="369"/>
    </location>
</feature>
<feature type="cross-link" description="Glycyl lysine isopeptide (Lys-Gly) (interchain with G-Cter in SUMO2)" evidence="2">
    <location>
        <position position="381"/>
    </location>
</feature>
<feature type="sequence conflict" description="In Ref. 2; AAA50407." evidence="6" ref="2">
    <original>S</original>
    <variation>C</variation>
    <location>
        <position position="300"/>
    </location>
</feature>
<feature type="helix" evidence="9">
    <location>
        <begin position="34"/>
        <end position="36"/>
    </location>
</feature>
<feature type="helix" evidence="9">
    <location>
        <begin position="41"/>
        <end position="50"/>
    </location>
</feature>
<feature type="helix" evidence="9">
    <location>
        <begin position="57"/>
        <end position="67"/>
    </location>
</feature>
<feature type="strand" evidence="9">
    <location>
        <begin position="72"/>
        <end position="75"/>
    </location>
</feature>
<feature type="helix" evidence="9">
    <location>
        <begin position="82"/>
        <end position="93"/>
    </location>
</feature>
<feature type="strand" evidence="9">
    <location>
        <begin position="103"/>
        <end position="106"/>
    </location>
</feature>
<feature type="helix" evidence="9">
    <location>
        <begin position="110"/>
        <end position="123"/>
    </location>
</feature>
<feature type="turn" evidence="9">
    <location>
        <begin position="124"/>
        <end position="127"/>
    </location>
</feature>
<feature type="strand" evidence="9">
    <location>
        <begin position="131"/>
        <end position="134"/>
    </location>
</feature>
<feature type="helix" evidence="9">
    <location>
        <begin position="140"/>
        <end position="149"/>
    </location>
</feature>
<feature type="strand" evidence="9">
    <location>
        <begin position="153"/>
        <end position="157"/>
    </location>
</feature>
<feature type="helix" evidence="9">
    <location>
        <begin position="159"/>
        <end position="167"/>
    </location>
</feature>
<feature type="strand" evidence="9">
    <location>
        <begin position="178"/>
        <end position="181"/>
    </location>
</feature>
<feature type="helix" evidence="9">
    <location>
        <begin position="184"/>
        <end position="189"/>
    </location>
</feature>
<feature type="helix" evidence="9">
    <location>
        <begin position="193"/>
        <end position="202"/>
    </location>
</feature>
<feature type="strand" evidence="9">
    <location>
        <begin position="208"/>
        <end position="212"/>
    </location>
</feature>
<feature type="helix" evidence="9">
    <location>
        <begin position="218"/>
        <end position="227"/>
    </location>
</feature>
<feature type="strand" evidence="9">
    <location>
        <begin position="232"/>
        <end position="235"/>
    </location>
</feature>
<feature type="helix" evidence="8">
    <location>
        <begin position="238"/>
        <end position="240"/>
    </location>
</feature>
<feature type="strand" evidence="8">
    <location>
        <begin position="244"/>
        <end position="255"/>
    </location>
</feature>
<feature type="helix" evidence="8">
    <location>
        <begin position="256"/>
        <end position="258"/>
    </location>
</feature>
<feature type="helix" evidence="8">
    <location>
        <begin position="259"/>
        <end position="265"/>
    </location>
</feature>
<feature type="helix" evidence="8">
    <location>
        <begin position="267"/>
        <end position="270"/>
    </location>
</feature>
<feature type="strand" evidence="8">
    <location>
        <begin position="273"/>
        <end position="278"/>
    </location>
</feature>
<feature type="helix" evidence="8">
    <location>
        <begin position="282"/>
        <end position="293"/>
    </location>
</feature>
<feature type="turn" evidence="8">
    <location>
        <begin position="294"/>
        <end position="296"/>
    </location>
</feature>
<feature type="strand" evidence="8">
    <location>
        <begin position="300"/>
        <end position="302"/>
    </location>
</feature>
<feature type="helix" evidence="8">
    <location>
        <begin position="308"/>
        <end position="319"/>
    </location>
</feature>
<feature type="strand" evidence="8">
    <location>
        <begin position="325"/>
        <end position="328"/>
    </location>
</feature>
<feature type="helix" evidence="8">
    <location>
        <begin position="330"/>
        <end position="332"/>
    </location>
</feature>
<feature type="strand" evidence="8">
    <location>
        <begin position="341"/>
        <end position="348"/>
    </location>
</feature>
<feature type="helix" evidence="8">
    <location>
        <begin position="355"/>
        <end position="360"/>
    </location>
</feature>
<feature type="strand" evidence="8">
    <location>
        <begin position="370"/>
        <end position="377"/>
    </location>
</feature>
<feature type="helix" evidence="8">
    <location>
        <begin position="378"/>
        <end position="391"/>
    </location>
</feature>
<feature type="helix" evidence="8">
    <location>
        <begin position="401"/>
        <end position="404"/>
    </location>
</feature>
<comment type="function">
    <text evidence="2">ATP-dependent RNA helicase which is a subunit of the eIF4F complex involved in cap recognition and is required for mRNA binding to ribosome. In the current model of translation initiation, eIF4A unwinds RNA secondary structures in the 5'-UTR of mRNAs which is necessary to allow efficient binding of the small ribosomal subunit, and subsequent scanning for the initiator codon. As a result, promotes cell proliferation and growth (By similarity).</text>
</comment>
<comment type="catalytic activity">
    <reaction>
        <text>ATP + H2O = ADP + phosphate + H(+)</text>
        <dbReference type="Rhea" id="RHEA:13065"/>
        <dbReference type="ChEBI" id="CHEBI:15377"/>
        <dbReference type="ChEBI" id="CHEBI:15378"/>
        <dbReference type="ChEBI" id="CHEBI:30616"/>
        <dbReference type="ChEBI" id="CHEBI:43474"/>
        <dbReference type="ChEBI" id="CHEBI:456216"/>
        <dbReference type="EC" id="3.6.4.13"/>
    </reaction>
</comment>
<comment type="subunit">
    <text evidence="1 2">eIF4F is a multi-subunit complex, the composition of which varies with external and internal environmental conditions. It is composed of at least EIF4A, EIF4E and EIF4G1/EIF4G3. Interacts with PAIP1, EIF4E and UPF2. Found in a complex with XPO7, EIF4A1, ARHGAP1, VPS26A, VPS29, VPS35 and SFN. May interact with NOM1. Interacts with PDCD4; this interferes with the interaction between EIF4A and EIF4G. Interacts with RBM4 (By similarity). Interacts with DDX3X in an RNA-independent manner (By similarity). Interacts with PKP1 (via N-terminus); the interaction promotes EIF4A1 recruitment to the cap-dependent translation complex and EIF4A1 ATPase activity (By similarity).</text>
</comment>
<comment type="interaction">
    <interactant intactId="EBI-6665935">
        <id>P60843</id>
    </interactant>
    <interactant intactId="EBI-8175606">
        <id>Q6NZJ6</id>
        <label>Eif4g1</label>
    </interactant>
    <organismsDiffer>false</organismsDiffer>
    <experiments>2</experiments>
</comment>
<comment type="interaction">
    <interactant intactId="EBI-6665935">
        <id>P60843</id>
    </interactant>
    <interactant intactId="EBI-296473">
        <id>Q61823</id>
        <label>Pdcd4</label>
    </interactant>
    <organismsDiffer>false</organismsDiffer>
    <experiments>4</experiments>
</comment>
<comment type="subcellular location">
    <subcellularLocation>
        <location evidence="2">Cytoplasm</location>
        <location evidence="2">Perinuclear region</location>
    </subcellularLocation>
    <subcellularLocation>
        <location evidence="2">Cell membrane</location>
    </subcellularLocation>
    <subcellularLocation>
        <location evidence="2">Cytoplasm</location>
        <location evidence="2">Stress granule</location>
    </subcellularLocation>
    <text evidence="2">Colocalizes with PKP1 in stress granules following arsenate or hydrogen peroxide treatment.</text>
</comment>
<comment type="similarity">
    <text evidence="6">Belongs to the DEAD box helicase family. eIF4A subfamily.</text>
</comment>
<comment type="sequence caution" evidence="6">
    <conflict type="erroneous initiation">
        <sequence resource="EMBL-CDS" id="CAA26842"/>
    </conflict>
</comment>
<comment type="sequence caution" evidence="6">
    <conflict type="erroneous initiation">
        <sequence resource="EMBL-CDS" id="CAA26843"/>
    </conflict>
</comment>
<comment type="sequence caution" evidence="6">
    <conflict type="erroneous initiation">
        <sequence resource="EMBL-CDS" id="CAA26845"/>
    </conflict>
</comment>
<comment type="sequence caution" evidence="6">
    <conflict type="erroneous initiation">
        <sequence resource="EMBL-CDS" id="CAA26846"/>
    </conflict>
</comment>
<evidence type="ECO:0000250" key="1"/>
<evidence type="ECO:0000250" key="2">
    <source>
        <dbReference type="UniProtKB" id="P60842"/>
    </source>
</evidence>
<evidence type="ECO:0000255" key="3">
    <source>
        <dbReference type="PROSITE-ProRule" id="PRU00541"/>
    </source>
</evidence>
<evidence type="ECO:0000255" key="4">
    <source>
        <dbReference type="PROSITE-ProRule" id="PRU00542"/>
    </source>
</evidence>
<evidence type="ECO:0000256" key="5">
    <source>
        <dbReference type="SAM" id="MobiDB-lite"/>
    </source>
</evidence>
<evidence type="ECO:0000305" key="6"/>
<evidence type="ECO:0007744" key="7">
    <source>
    </source>
</evidence>
<evidence type="ECO:0007829" key="8">
    <source>
        <dbReference type="PDB" id="6XKI"/>
    </source>
</evidence>
<evidence type="ECO:0007829" key="9">
    <source>
        <dbReference type="PDB" id="7DDX"/>
    </source>
</evidence>
<organism>
    <name type="scientific">Mus musculus</name>
    <name type="common">Mouse</name>
    <dbReference type="NCBI Taxonomy" id="10090"/>
    <lineage>
        <taxon>Eukaryota</taxon>
        <taxon>Metazoa</taxon>
        <taxon>Chordata</taxon>
        <taxon>Craniata</taxon>
        <taxon>Vertebrata</taxon>
        <taxon>Euteleostomi</taxon>
        <taxon>Mammalia</taxon>
        <taxon>Eutheria</taxon>
        <taxon>Euarchontoglires</taxon>
        <taxon>Glires</taxon>
        <taxon>Rodentia</taxon>
        <taxon>Myomorpha</taxon>
        <taxon>Muroidea</taxon>
        <taxon>Muridae</taxon>
        <taxon>Murinae</taxon>
        <taxon>Mus</taxon>
        <taxon>Mus</taxon>
    </lineage>
</organism>
<accession>P60843</accession>
<accession>P04765</accession>
<accession>Q61516</accession>